<feature type="initiator methionine" description="Removed" evidence="1 3 13">
    <location>
        <position position="1"/>
    </location>
</feature>
<feature type="chain" id="PRO_0000125104" description="Large ribosomal subunit protein uL5A">
    <location>
        <begin position="2"/>
        <end position="174"/>
    </location>
</feature>
<feature type="modified residue" description="N-acetylserine" evidence="1 3 13">
    <location>
        <position position="2"/>
    </location>
</feature>
<feature type="modified residue" description="N6,N6,N6-trimethyllysine" evidence="5">
    <location>
        <position position="75"/>
    </location>
</feature>
<feature type="sequence conflict" description="In Ref. 5; AA sequence." evidence="10" ref="5">
    <original>L</original>
    <variation>D</variation>
    <location>
        <position position="12"/>
    </location>
</feature>
<feature type="sequence conflict" description="In Ref. 1; CAA25515." evidence="10" ref="1">
    <original>E</original>
    <variation>Q</variation>
    <location>
        <position position="25"/>
    </location>
</feature>
<comment type="function">
    <text evidence="11">Component of the ribosome, a large ribonucleoprotein complex responsible for the synthesis of proteins in the cell. The small ribosomal subunit (SSU) binds messenger RNAs (mRNAs) and translates the encoded message by selecting cognate aminoacyl-transfer RNA (tRNA) molecules. The large subunit (LSU) contains the ribosomal catalytic site termed the peptidyl transferase center (PTC), which catalyzes the formation of peptide bonds, thereby polymerizing the amino acids delivered by tRNAs into a polypeptide chain. The nascent polypeptides leave the ribosome through a tunnel in the LSU and interact with protein factors that function in enzymatic processing, targeting, and the membrane insertion of nascent chains at the exit of the ribosomal tunnel.</text>
</comment>
<comment type="subunit">
    <text evidence="4 6 7 12">Component of the large ribosomal subunit (LSU). Mature yeast ribosomes consist of a small (40S) and a large (60S) subunit. The 40S small subunit contains 1 molecule of ribosomal RNA (18S rRNA) and 33 different proteins (encoded by 57 genes). The large 60S subunit contains 3 rRNA molecules (25S, 5.8S and 5S rRNA) and 46 different proteins (encoded by 81 genes) (PubMed:22096102, PubMed:9559554). Component of a hexameric 5S RNP precursor complex, composed of 5S RNA, RRS1, RPF2, RPL5, RPL11A/RPL11B and SYO1; this complex acts as a precursor for ribosome assembly (PubMed:37291423). RPL11A/RPL11B/uL5 forms a heterotrimeric complex with RPL5/uL18 and SYO1. Interaction of this complex with KAP104 allows the nuclear import of the heterotrimer (PubMed:23118189).</text>
</comment>
<comment type="subcellular location">
    <subcellularLocation>
        <location evidence="4">Cytoplasm</location>
    </subcellularLocation>
    <subcellularLocation>
        <location evidence="6">Nucleus</location>
    </subcellularLocation>
    <text evidence="6">The SYO1-uL5-uL18 complex is transported into the nucleus by KAP104.</text>
</comment>
<comment type="PTM">
    <text evidence="1 3">N-terminally acetylated by acetyltransferase NatA.</text>
</comment>
<comment type="miscellaneous">
    <text evidence="2">Present with 39000 molecules/cell in log phase SD medium.</text>
</comment>
<comment type="miscellaneous">
    <text evidence="10">There are 2 genes for uL5 in yeast.</text>
</comment>
<comment type="similarity">
    <text evidence="10">Belongs to the universal ribosomal protein uL5 family.</text>
</comment>
<gene>
    <name evidence="9" type="primary">RPL11A</name>
    <name type="synonym">RP39A</name>
    <name type="synonym">RPL16A</name>
    <name type="ordered locus">YPR102C</name>
    <name type="ORF">P8283.14</name>
</gene>
<sequence length="174" mass="19720">MSAKAQNPMRDLKIEKLVLNISVGESGDRLTRASKVLEQLSGQTPVQSKARYTVRTFGIRRNEKIAVHVTVRGPKAEEILERGLKVKEYQLRDRNFSATGNFGFGIDEHIDLGIKYDPSIGIFGMDFYVVMNRPGARVTRRKRCKGTVGNSHKTTKEDTVSWFKQKYDADVLDK</sequence>
<accession>P0C0W9</accession>
<accession>D6W4A0</accession>
<accession>P06380</accession>
<name>RL11A_YEAST</name>
<evidence type="ECO:0000269" key="1">
    <source>
    </source>
</evidence>
<evidence type="ECO:0000269" key="2">
    <source>
    </source>
</evidence>
<evidence type="ECO:0000269" key="3">
    <source>
    </source>
</evidence>
<evidence type="ECO:0000269" key="4">
    <source>
    </source>
</evidence>
<evidence type="ECO:0000269" key="5">
    <source>
    </source>
</evidence>
<evidence type="ECO:0000269" key="6">
    <source>
    </source>
</evidence>
<evidence type="ECO:0000269" key="7">
    <source>
    </source>
</evidence>
<evidence type="ECO:0000303" key="8">
    <source>
    </source>
</evidence>
<evidence type="ECO:0000303" key="9">
    <source>
    </source>
</evidence>
<evidence type="ECO:0000305" key="10"/>
<evidence type="ECO:0000305" key="11">
    <source>
    </source>
</evidence>
<evidence type="ECO:0000305" key="12">
    <source>
    </source>
</evidence>
<evidence type="ECO:0007744" key="13">
    <source>
    </source>
</evidence>
<reference key="1">
    <citation type="journal article" date="1984" name="FEBS Lett.">
        <title>The primary structure of the gene encoding yeast ribosomal protein L16.</title>
        <authorList>
            <person name="Leer R.J."/>
            <person name="van Raamsdonk-Duin M.M.C."/>
            <person name="Mager W.H."/>
            <person name="Planta R.J."/>
        </authorList>
    </citation>
    <scope>NUCLEOTIDE SEQUENCE [GENOMIC DNA]</scope>
</reference>
<reference key="2">
    <citation type="journal article" date="1997" name="Nature">
        <title>The nucleotide sequence of Saccharomyces cerevisiae chromosome XVI.</title>
        <authorList>
            <person name="Bussey H."/>
            <person name="Storms R.K."/>
            <person name="Ahmed A."/>
            <person name="Albermann K."/>
            <person name="Allen E."/>
            <person name="Ansorge W."/>
            <person name="Araujo R."/>
            <person name="Aparicio A."/>
            <person name="Barrell B.G."/>
            <person name="Badcock K."/>
            <person name="Benes V."/>
            <person name="Botstein D."/>
            <person name="Bowman S."/>
            <person name="Brueckner M."/>
            <person name="Carpenter J."/>
            <person name="Cherry J.M."/>
            <person name="Chung E."/>
            <person name="Churcher C.M."/>
            <person name="Coster F."/>
            <person name="Davis K."/>
            <person name="Davis R.W."/>
            <person name="Dietrich F.S."/>
            <person name="Delius H."/>
            <person name="DiPaolo T."/>
            <person name="Dubois E."/>
            <person name="Duesterhoeft A."/>
            <person name="Duncan M."/>
            <person name="Floeth M."/>
            <person name="Fortin N."/>
            <person name="Friesen J.D."/>
            <person name="Fritz C."/>
            <person name="Goffeau A."/>
            <person name="Hall J."/>
            <person name="Hebling U."/>
            <person name="Heumann K."/>
            <person name="Hilbert H."/>
            <person name="Hillier L.W."/>
            <person name="Hunicke-Smith S."/>
            <person name="Hyman R.W."/>
            <person name="Johnston M."/>
            <person name="Kalman S."/>
            <person name="Kleine K."/>
            <person name="Komp C."/>
            <person name="Kurdi O."/>
            <person name="Lashkari D."/>
            <person name="Lew H."/>
            <person name="Lin A."/>
            <person name="Lin D."/>
            <person name="Louis E.J."/>
            <person name="Marathe R."/>
            <person name="Messenguy F."/>
            <person name="Mewes H.-W."/>
            <person name="Mirtipati S."/>
            <person name="Moestl D."/>
            <person name="Mueller-Auer S."/>
            <person name="Namath A."/>
            <person name="Nentwich U."/>
            <person name="Oefner P."/>
            <person name="Pearson D."/>
            <person name="Petel F.X."/>
            <person name="Pohl T.M."/>
            <person name="Purnelle B."/>
            <person name="Rajandream M.A."/>
            <person name="Rechmann S."/>
            <person name="Rieger M."/>
            <person name="Riles L."/>
            <person name="Roberts D."/>
            <person name="Schaefer M."/>
            <person name="Scharfe M."/>
            <person name="Scherens B."/>
            <person name="Schramm S."/>
            <person name="Schroeder M."/>
            <person name="Sdicu A.-M."/>
            <person name="Tettelin H."/>
            <person name="Urrestarazu L.A."/>
            <person name="Ushinsky S."/>
            <person name="Vierendeels F."/>
            <person name="Vissers S."/>
            <person name="Voss H."/>
            <person name="Walsh S.V."/>
            <person name="Wambutt R."/>
            <person name="Wang Y."/>
            <person name="Wedler E."/>
            <person name="Wedler H."/>
            <person name="Winnett E."/>
            <person name="Zhong W.-W."/>
            <person name="Zollner A."/>
            <person name="Vo D.H."/>
            <person name="Hani J."/>
        </authorList>
    </citation>
    <scope>NUCLEOTIDE SEQUENCE [LARGE SCALE GENOMIC DNA]</scope>
    <source>
        <strain>ATCC 204508 / S288c</strain>
    </source>
</reference>
<reference key="3">
    <citation type="journal article" date="2014" name="G3 (Bethesda)">
        <title>The reference genome sequence of Saccharomyces cerevisiae: Then and now.</title>
        <authorList>
            <person name="Engel S.R."/>
            <person name="Dietrich F.S."/>
            <person name="Fisk D.G."/>
            <person name="Binkley G."/>
            <person name="Balakrishnan R."/>
            <person name="Costanzo M.C."/>
            <person name="Dwight S.S."/>
            <person name="Hitz B.C."/>
            <person name="Karra K."/>
            <person name="Nash R.S."/>
            <person name="Weng S."/>
            <person name="Wong E.D."/>
            <person name="Lloyd P."/>
            <person name="Skrzypek M.S."/>
            <person name="Miyasato S.R."/>
            <person name="Simison M."/>
            <person name="Cherry J.M."/>
        </authorList>
    </citation>
    <scope>GENOME REANNOTATION</scope>
    <source>
        <strain>ATCC 204508 / S288c</strain>
    </source>
</reference>
<reference key="4">
    <citation type="journal article" date="2007" name="Genome Res.">
        <title>Approaching a complete repository of sequence-verified protein-encoding clones for Saccharomyces cerevisiae.</title>
        <authorList>
            <person name="Hu Y."/>
            <person name="Rolfs A."/>
            <person name="Bhullar B."/>
            <person name="Murthy T.V.S."/>
            <person name="Zhu C."/>
            <person name="Berger M.F."/>
            <person name="Camargo A.A."/>
            <person name="Kelley F."/>
            <person name="McCarron S."/>
            <person name="Jepson D."/>
            <person name="Richardson A."/>
            <person name="Raphael J."/>
            <person name="Moreira D."/>
            <person name="Taycher E."/>
            <person name="Zuo D."/>
            <person name="Mohr S."/>
            <person name="Kane M.F."/>
            <person name="Williamson J."/>
            <person name="Simpson A.J.G."/>
            <person name="Bulyk M.L."/>
            <person name="Harlow E."/>
            <person name="Marsischky G."/>
            <person name="Kolodner R.D."/>
            <person name="LaBaer J."/>
        </authorList>
    </citation>
    <scope>NUCLEOTIDE SEQUENCE [GENOMIC DNA]</scope>
    <source>
        <strain>ATCC 204508 / S288c</strain>
    </source>
</reference>
<reference key="5">
    <citation type="journal article" date="1992" name="J. Biol. Chem.">
        <title>NH2-terminal acetylation of ribosomal proteins of Saccharomyces cerevisiae.</title>
        <authorList>
            <person name="Takakura H."/>
            <person name="Tsunasawa S."/>
            <person name="Miyagi M."/>
            <person name="Warner J.R."/>
        </authorList>
    </citation>
    <scope>PROTEIN SEQUENCE OF 2-17</scope>
    <scope>ACETYLATION AT SER-2 BY NATA</scope>
</reference>
<reference key="6">
    <citation type="journal article" date="1994" name="J. Biol. Chem.">
        <title>Localization of Saccharomyces cerevisiae ribosomal protein L16 on the surface of 60 S ribosomal subunits by immunoelectron microscopy.</title>
        <authorList>
            <person name="Tsay Y.-F."/>
            <person name="Shankweiler G."/>
            <person name="Lake J."/>
            <person name="Woolford J.L. Jr."/>
        </authorList>
    </citation>
    <scope>SUBUNIT</scope>
</reference>
<reference key="7">
    <citation type="journal article" date="1998" name="Yeast">
        <title>The list of cytoplasmic ribosomal proteins of Saccharomyces cerevisiae.</title>
        <authorList>
            <person name="Planta R.J."/>
            <person name="Mager W.H."/>
        </authorList>
    </citation>
    <scope>NOMENCLATURE</scope>
    <scope>SUBUNIT</scope>
</reference>
<reference key="8">
    <citation type="journal article" date="1999" name="J. Biol. Chem.">
        <title>The action of N-terminal acetyltransferases on yeast ribosomal proteins.</title>
        <authorList>
            <person name="Arnold R.J."/>
            <person name="Polevoda B."/>
            <person name="Reilly J.P."/>
            <person name="Sherman F."/>
        </authorList>
    </citation>
    <scope>CLEAVAGE OF INITIATOR METHIONINE</scope>
    <scope>ACETYLATION AT SER-2 BY NATA</scope>
</reference>
<reference key="9">
    <citation type="journal article" date="2003" name="Nature">
        <title>Global analysis of protein localization in budding yeast.</title>
        <authorList>
            <person name="Huh W.-K."/>
            <person name="Falvo J.V."/>
            <person name="Gerke L.C."/>
            <person name="Carroll A.S."/>
            <person name="Howson R.W."/>
            <person name="Weissman J.S."/>
            <person name="O'Shea E.K."/>
        </authorList>
    </citation>
    <scope>SUBCELLULAR LOCATION [LARGE SCALE ANALYSIS]</scope>
</reference>
<reference key="10">
    <citation type="journal article" date="2003" name="Nature">
        <title>Global analysis of protein expression in yeast.</title>
        <authorList>
            <person name="Ghaemmaghami S."/>
            <person name="Huh W.-K."/>
            <person name="Bower K."/>
            <person name="Howson R.W."/>
            <person name="Belle A."/>
            <person name="Dephoure N."/>
            <person name="O'Shea E.K."/>
            <person name="Weissman J.S."/>
        </authorList>
    </citation>
    <scope>LEVEL OF PROTEIN EXPRESSION [LARGE SCALE ANALYSIS]</scope>
</reference>
<reference key="11">
    <citation type="journal article" date="2012" name="Proc. Natl. Acad. Sci. U.S.A.">
        <title>N-terminal acetylome analyses and functional insights of the N-terminal acetyltransferase NatB.</title>
        <authorList>
            <person name="Van Damme P."/>
            <person name="Lasa M."/>
            <person name="Polevoda B."/>
            <person name="Gazquez C."/>
            <person name="Elosegui-Artola A."/>
            <person name="Kim D.S."/>
            <person name="De Juan-Pardo E."/>
            <person name="Demeyer K."/>
            <person name="Hole K."/>
            <person name="Larrea E."/>
            <person name="Timmerman E."/>
            <person name="Prieto J."/>
            <person name="Arnesen T."/>
            <person name="Sherman F."/>
            <person name="Gevaert K."/>
            <person name="Aldabe R."/>
        </authorList>
    </citation>
    <scope>ACETYLATION [LARGE SCALE ANALYSIS] AT SER-2</scope>
    <scope>CLEAVAGE OF INITIATOR METHIONINE [LARGE SCALE ANALYSIS]</scope>
    <scope>IDENTIFICATION BY MASS SPECTROMETRY [LARGE SCALE ANALYSIS]</scope>
</reference>
<reference key="12">
    <citation type="journal article" date="2012" name="Proteomics">
        <title>Methylation of translation-associated proteins in Saccharomyces cerevisiae: Identification of methylated lysines and their methyltransferases.</title>
        <authorList>
            <person name="Couttas T.A."/>
            <person name="Raftery M.J."/>
            <person name="Padula M.P."/>
            <person name="Herbert B.R."/>
            <person name="Wilkins M.R."/>
        </authorList>
    </citation>
    <scope>METHYLATION AT LYS-75</scope>
</reference>
<reference key="13">
    <citation type="journal article" date="2012" name="Science">
        <title>Synchronizing nuclear import of ribosomal proteins with ribosome assembly.</title>
        <authorList>
            <person name="Kressler D."/>
            <person name="Bange G."/>
            <person name="Ogawa Y."/>
            <person name="Stjepanovic G."/>
            <person name="Bradatsch B."/>
            <person name="Pratte D."/>
            <person name="Amlacher S."/>
            <person name="Strauss D."/>
            <person name="Yoneda Y."/>
            <person name="Katahira J."/>
            <person name="Sinning I."/>
            <person name="Hurt E."/>
        </authorList>
    </citation>
    <scope>INTERACTION WITH RPL5 AND SYO1</scope>
    <scope>SUBCELLULAR LOCATION</scope>
</reference>
<reference key="14">
    <citation type="journal article" date="2014" name="Curr. Opin. Struct. Biol.">
        <title>A new system for naming ribosomal proteins.</title>
        <authorList>
            <person name="Ban N."/>
            <person name="Beckmann R."/>
            <person name="Cate J.H.D."/>
            <person name="Dinman J.D."/>
            <person name="Dragon F."/>
            <person name="Ellis S.R."/>
            <person name="Lafontaine D.L.J."/>
            <person name="Lindahl L."/>
            <person name="Liljas A."/>
            <person name="Lipton J.M."/>
            <person name="McAlear M.A."/>
            <person name="Moore P.B."/>
            <person name="Noller H.F."/>
            <person name="Ortega J."/>
            <person name="Panse V.G."/>
            <person name="Ramakrishnan V."/>
            <person name="Spahn C.M.T."/>
            <person name="Steitz T.A."/>
            <person name="Tchorzewski M."/>
            <person name="Tollervey D."/>
            <person name="Warren A.J."/>
            <person name="Williamson J.R."/>
            <person name="Wilson D."/>
            <person name="Yonath A."/>
            <person name="Yusupov M."/>
        </authorList>
    </citation>
    <scope>NOMENCLATURE</scope>
</reference>
<reference key="15">
    <citation type="journal article" date="2023" name="Nat. Struct. Mol. Biol.">
        <title>Structure of nascent 5S RNPs at the crossroad between ribosome assembly and MDM2-p53 pathways.</title>
        <authorList>
            <person name="Castillo Duque de Estrada N.M."/>
            <person name="Thoms M."/>
            <person name="Flemming D."/>
            <person name="Hammaren H.M."/>
            <person name="Buschauer R."/>
            <person name="Ameismeier M."/>
            <person name="Bassler J."/>
            <person name="Beck M."/>
            <person name="Beckmann R."/>
            <person name="Hurt E."/>
        </authorList>
    </citation>
    <scope>SUBUNIT</scope>
</reference>
<reference key="16">
    <citation type="journal article" date="2001" name="Cell">
        <title>Structure of the 80S ribosome from Saccharomyces cerevisiae -- tRNA-ribosome and subunit-subunit interactions.</title>
        <authorList>
            <person name="Spahn C.M.T."/>
            <person name="Beckmann R."/>
            <person name="Eswar N."/>
            <person name="Penczek P.A."/>
            <person name="Sali A."/>
            <person name="Blobel G."/>
            <person name="Frank J."/>
        </authorList>
    </citation>
    <scope>3D-STRUCTURE MODELING OF 7-171</scope>
    <scope>ELECTRON MICROSCOPY</scope>
</reference>
<reference key="17">
    <citation type="journal article" date="2004" name="EMBO J.">
        <title>Domain movements of elongation factor eEF2 and the eukaryotic 80S ribosome facilitate tRNA translocation.</title>
        <authorList>
            <person name="Spahn C.M.T."/>
            <person name="Gomez-Lorenzo M.G."/>
            <person name="Grassucci R.A."/>
            <person name="Joergensen R."/>
            <person name="Andersen G.R."/>
            <person name="Beckmann R."/>
            <person name="Penczek P.A."/>
            <person name="Ballesta J.P.G."/>
            <person name="Frank J."/>
        </authorList>
    </citation>
    <scope>3D-STRUCTURE MODELING</scope>
    <scope>ELECTRON MICROSCOPY</scope>
</reference>
<reference key="18">
    <citation type="journal article" date="2010" name="Science">
        <title>Crystal structure of the eukaryotic ribosome.</title>
        <authorList>
            <person name="Ben-Shem A."/>
            <person name="Jenner L."/>
            <person name="Yusupova G."/>
            <person name="Yusupov M."/>
        </authorList>
    </citation>
    <scope>X-RAY CRYSTALLOGRAPHY (4.0 ANGSTROMS) OF 80S RIBOSOME</scope>
</reference>
<reference key="19">
    <citation type="journal article" date="2011" name="Science">
        <title>The structure of the eukaryotic ribosome at 3.0 A resolution.</title>
        <authorList>
            <person name="Ben-Shem A."/>
            <person name="Garreau de Loubresse N."/>
            <person name="Melnikov S."/>
            <person name="Jenner L."/>
            <person name="Yusupova G."/>
            <person name="Yusupov M."/>
        </authorList>
    </citation>
    <scope>X-RAY CRYSTALLOGRAPHY (3.0 ANGSTROMS) OF 80S RIBOSOME</scope>
    <scope>SUBUNIT</scope>
    <scope>SUBCELLULAR LOCATION</scope>
</reference>
<organism>
    <name type="scientific">Saccharomyces cerevisiae (strain ATCC 204508 / S288c)</name>
    <name type="common">Baker's yeast</name>
    <dbReference type="NCBI Taxonomy" id="559292"/>
    <lineage>
        <taxon>Eukaryota</taxon>
        <taxon>Fungi</taxon>
        <taxon>Dikarya</taxon>
        <taxon>Ascomycota</taxon>
        <taxon>Saccharomycotina</taxon>
        <taxon>Saccharomycetes</taxon>
        <taxon>Saccharomycetales</taxon>
        <taxon>Saccharomycetaceae</taxon>
        <taxon>Saccharomyces</taxon>
    </lineage>
</organism>
<proteinExistence type="evidence at protein level"/>
<dbReference type="EMBL" id="X01029">
    <property type="protein sequence ID" value="CAA25515.1"/>
    <property type="molecule type" value="Genomic_DNA"/>
</dbReference>
<dbReference type="EMBL" id="U32445">
    <property type="protein sequence ID" value="AAB68072.1"/>
    <property type="molecule type" value="Genomic_DNA"/>
</dbReference>
<dbReference type="EMBL" id="AY693151">
    <property type="protein sequence ID" value="AAT93170.1"/>
    <property type="molecule type" value="Genomic_DNA"/>
</dbReference>
<dbReference type="EMBL" id="BK006949">
    <property type="protein sequence ID" value="DAA11516.1"/>
    <property type="molecule type" value="Genomic_DNA"/>
</dbReference>
<dbReference type="PIR" id="S59767">
    <property type="entry name" value="S59767"/>
</dbReference>
<dbReference type="RefSeq" id="NP_015427.1">
    <property type="nucleotide sequence ID" value="NM_001184199.1"/>
</dbReference>
<dbReference type="PDB" id="3J6X">
    <property type="method" value="EM"/>
    <property type="resolution" value="6.10 A"/>
    <property type="chains" value="51=1-174"/>
</dbReference>
<dbReference type="PDB" id="3J6Y">
    <property type="method" value="EM"/>
    <property type="resolution" value="6.10 A"/>
    <property type="chains" value="51=1-174"/>
</dbReference>
<dbReference type="PDB" id="3J77">
    <property type="method" value="EM"/>
    <property type="resolution" value="6.20 A"/>
    <property type="chains" value="61=1-174"/>
</dbReference>
<dbReference type="PDB" id="3J78">
    <property type="method" value="EM"/>
    <property type="resolution" value="6.30 A"/>
    <property type="chains" value="61=1-174"/>
</dbReference>
<dbReference type="PDB" id="3JCT">
    <property type="method" value="EM"/>
    <property type="resolution" value="3.08 A"/>
    <property type="chains" value="J=1-174"/>
</dbReference>
<dbReference type="PDB" id="4V4B">
    <property type="method" value="EM"/>
    <property type="resolution" value="11.70 A"/>
    <property type="chains" value="BJ=2-174"/>
</dbReference>
<dbReference type="PDB" id="4V5Z">
    <property type="method" value="EM"/>
    <property type="resolution" value="8.70 A"/>
    <property type="chains" value="Bd=2-172"/>
</dbReference>
<dbReference type="PDB" id="4V6I">
    <property type="method" value="EM"/>
    <property type="resolution" value="8.80 A"/>
    <property type="chains" value="BE=1-174"/>
</dbReference>
<dbReference type="PDB" id="4V7F">
    <property type="method" value="EM"/>
    <property type="resolution" value="8.70 A"/>
    <property type="chains" value="E=1-174"/>
</dbReference>
<dbReference type="PDB" id="4V7R">
    <property type="method" value="X-ray"/>
    <property type="resolution" value="4.00 A"/>
    <property type="chains" value="BK/DK=1-174"/>
</dbReference>
<dbReference type="PDB" id="4V88">
    <property type="method" value="X-ray"/>
    <property type="resolution" value="3.00 A"/>
    <property type="chains" value="BJ/DJ=1-174"/>
</dbReference>
<dbReference type="PDB" id="4V8Y">
    <property type="method" value="EM"/>
    <property type="resolution" value="4.30 A"/>
    <property type="chains" value="BJ=2-174"/>
</dbReference>
<dbReference type="PDB" id="4V8Z">
    <property type="method" value="EM"/>
    <property type="resolution" value="6.60 A"/>
    <property type="chains" value="BJ=2-174"/>
</dbReference>
<dbReference type="PDB" id="4V91">
    <property type="method" value="EM"/>
    <property type="resolution" value="3.70 A"/>
    <property type="chains" value="J=1-174"/>
</dbReference>
<dbReference type="PDB" id="5APN">
    <property type="method" value="EM"/>
    <property type="resolution" value="3.91 A"/>
    <property type="chains" value="J=1-174"/>
</dbReference>
<dbReference type="PDB" id="5APO">
    <property type="method" value="EM"/>
    <property type="resolution" value="3.41 A"/>
    <property type="chains" value="J=1-174"/>
</dbReference>
<dbReference type="PDB" id="5DGE">
    <property type="method" value="X-ray"/>
    <property type="resolution" value="3.45 A"/>
    <property type="chains" value="M1/m1=2-174"/>
</dbReference>
<dbReference type="PDB" id="5FCI">
    <property type="method" value="X-ray"/>
    <property type="resolution" value="3.40 A"/>
    <property type="chains" value="M1/m1=2-174"/>
</dbReference>
<dbReference type="PDB" id="5FCJ">
    <property type="method" value="X-ray"/>
    <property type="resolution" value="3.10 A"/>
    <property type="chains" value="M1/m1=2-174"/>
</dbReference>
<dbReference type="PDB" id="5GAK">
    <property type="method" value="EM"/>
    <property type="resolution" value="3.88 A"/>
    <property type="chains" value="M=1-174"/>
</dbReference>
<dbReference type="PDB" id="5H4P">
    <property type="method" value="EM"/>
    <property type="resolution" value="3.07 A"/>
    <property type="chains" value="J=1-174"/>
</dbReference>
<dbReference type="PDB" id="5JCS">
    <property type="method" value="EM"/>
    <property type="resolution" value="9.50 A"/>
    <property type="chains" value="J=1-174"/>
</dbReference>
<dbReference type="PDB" id="5JUO">
    <property type="method" value="EM"/>
    <property type="resolution" value="4.00 A"/>
    <property type="chains" value="O=1-174"/>
</dbReference>
<dbReference type="PDB" id="5JUP">
    <property type="method" value="EM"/>
    <property type="resolution" value="3.50 A"/>
    <property type="chains" value="O=1-174"/>
</dbReference>
<dbReference type="PDB" id="5JUS">
    <property type="method" value="EM"/>
    <property type="resolution" value="4.20 A"/>
    <property type="chains" value="O=1-174"/>
</dbReference>
<dbReference type="PDB" id="5JUT">
    <property type="method" value="EM"/>
    <property type="resolution" value="4.00 A"/>
    <property type="chains" value="O=1-174"/>
</dbReference>
<dbReference type="PDB" id="5JUU">
    <property type="method" value="EM"/>
    <property type="resolution" value="4.00 A"/>
    <property type="chains" value="O=1-174"/>
</dbReference>
<dbReference type="PDB" id="5M1J">
    <property type="method" value="EM"/>
    <property type="resolution" value="3.30 A"/>
    <property type="chains" value="J5=6-174"/>
</dbReference>
<dbReference type="PDB" id="5MC6">
    <property type="method" value="EM"/>
    <property type="resolution" value="3.80 A"/>
    <property type="chains" value="AG=1-174"/>
</dbReference>
<dbReference type="PDB" id="5NDG">
    <property type="method" value="X-ray"/>
    <property type="resolution" value="3.70 A"/>
    <property type="chains" value="M1/m1=6-174"/>
</dbReference>
<dbReference type="PDB" id="5T62">
    <property type="method" value="EM"/>
    <property type="resolution" value="3.30 A"/>
    <property type="chains" value="M=1-174"/>
</dbReference>
<dbReference type="PDB" id="5T6R">
    <property type="method" value="EM"/>
    <property type="resolution" value="4.50 A"/>
    <property type="chains" value="M=1-174"/>
</dbReference>
<dbReference type="PDB" id="6FT6">
    <property type="method" value="EM"/>
    <property type="resolution" value="3.90 A"/>
    <property type="chains" value="J=1-174"/>
</dbReference>
<dbReference type="PDB" id="6HD7">
    <property type="method" value="EM"/>
    <property type="resolution" value="3.40 A"/>
    <property type="chains" value="M=1-174"/>
</dbReference>
<dbReference type="PDB" id="6M62">
    <property type="method" value="EM"/>
    <property type="resolution" value="3.20 A"/>
    <property type="chains" value="J=1-174"/>
</dbReference>
<dbReference type="PDB" id="6N8J">
    <property type="method" value="EM"/>
    <property type="resolution" value="3.50 A"/>
    <property type="chains" value="J=1-174"/>
</dbReference>
<dbReference type="PDB" id="6N8K">
    <property type="method" value="EM"/>
    <property type="resolution" value="3.60 A"/>
    <property type="chains" value="J=1-174"/>
</dbReference>
<dbReference type="PDB" id="6N8L">
    <property type="method" value="EM"/>
    <property type="resolution" value="3.60 A"/>
    <property type="chains" value="J=1-174"/>
</dbReference>
<dbReference type="PDB" id="6N8M">
    <property type="method" value="EM"/>
    <property type="resolution" value="3.50 A"/>
    <property type="chains" value="M=1-174"/>
</dbReference>
<dbReference type="PDB" id="6N8N">
    <property type="method" value="EM"/>
    <property type="resolution" value="3.80 A"/>
    <property type="chains" value="M=1-174"/>
</dbReference>
<dbReference type="PDB" id="6N8O">
    <property type="method" value="EM"/>
    <property type="resolution" value="3.50 A"/>
    <property type="chains" value="M=1-174"/>
</dbReference>
<dbReference type="PDB" id="6QIK">
    <property type="method" value="EM"/>
    <property type="resolution" value="3.10 A"/>
    <property type="chains" value="E=1-174"/>
</dbReference>
<dbReference type="PDB" id="6QT0">
    <property type="method" value="EM"/>
    <property type="resolution" value="3.40 A"/>
    <property type="chains" value="E=1-174"/>
</dbReference>
<dbReference type="PDB" id="6QTZ">
    <property type="method" value="EM"/>
    <property type="resolution" value="3.50 A"/>
    <property type="chains" value="E=1-174"/>
</dbReference>
<dbReference type="PDB" id="6RI5">
    <property type="method" value="EM"/>
    <property type="resolution" value="3.30 A"/>
    <property type="chains" value="E=1-174"/>
</dbReference>
<dbReference type="PDB" id="6RZZ">
    <property type="method" value="EM"/>
    <property type="resolution" value="3.20 A"/>
    <property type="chains" value="E=1-174"/>
</dbReference>
<dbReference type="PDB" id="6S05">
    <property type="method" value="EM"/>
    <property type="resolution" value="3.90 A"/>
    <property type="chains" value="E=1-174"/>
</dbReference>
<dbReference type="PDB" id="6SNT">
    <property type="method" value="EM"/>
    <property type="resolution" value="2.80 A"/>
    <property type="chains" value="q=1-174"/>
</dbReference>
<dbReference type="PDB" id="6SV4">
    <property type="method" value="EM"/>
    <property type="resolution" value="3.30 A"/>
    <property type="chains" value="AG/XG/zG=1-174"/>
</dbReference>
<dbReference type="PDB" id="6T7I">
    <property type="method" value="EM"/>
    <property type="resolution" value="3.20 A"/>
    <property type="chains" value="LJ=1-174"/>
</dbReference>
<dbReference type="PDB" id="6T7T">
    <property type="method" value="EM"/>
    <property type="resolution" value="3.10 A"/>
    <property type="chains" value="LJ=1-174"/>
</dbReference>
<dbReference type="PDB" id="6T83">
    <property type="method" value="EM"/>
    <property type="resolution" value="4.00 A"/>
    <property type="chains" value="Jy/Ma=1-174"/>
</dbReference>
<dbReference type="PDB" id="6YLG">
    <property type="method" value="EM"/>
    <property type="resolution" value="3.00 A"/>
    <property type="chains" value="J=1-174"/>
</dbReference>
<dbReference type="PDB" id="6YLH">
    <property type="method" value="EM"/>
    <property type="resolution" value="3.10 A"/>
    <property type="chains" value="J=1-174"/>
</dbReference>
<dbReference type="PDB" id="6Z6J">
    <property type="method" value="EM"/>
    <property type="resolution" value="3.40 A"/>
    <property type="chains" value="LJ=1-174"/>
</dbReference>
<dbReference type="PDB" id="6Z6K">
    <property type="method" value="EM"/>
    <property type="resolution" value="3.40 A"/>
    <property type="chains" value="LJ=1-174"/>
</dbReference>
<dbReference type="PDB" id="7BT6">
    <property type="method" value="EM"/>
    <property type="resolution" value="3.12 A"/>
    <property type="chains" value="J=1-174"/>
</dbReference>
<dbReference type="PDB" id="7BTB">
    <property type="method" value="EM"/>
    <property type="resolution" value="3.22 A"/>
    <property type="chains" value="J=1-174"/>
</dbReference>
<dbReference type="PDB" id="7MPI">
    <property type="method" value="EM"/>
    <property type="resolution" value="3.05 A"/>
    <property type="chains" value="AJ=6-174"/>
</dbReference>
<dbReference type="PDB" id="7MPJ">
    <property type="method" value="EM"/>
    <property type="resolution" value="2.70 A"/>
    <property type="chains" value="AJ=6-174"/>
</dbReference>
<dbReference type="PDB" id="7N8B">
    <property type="method" value="EM"/>
    <property type="resolution" value="3.05 A"/>
    <property type="chains" value="AJ=6-174"/>
</dbReference>
<dbReference type="PDB" id="7OH3">
    <property type="method" value="EM"/>
    <property type="resolution" value="3.40 A"/>
    <property type="chains" value="J=1-174"/>
</dbReference>
<dbReference type="PDB" id="7OHQ">
    <property type="method" value="EM"/>
    <property type="resolution" value="3.10 A"/>
    <property type="chains" value="J=1-174"/>
</dbReference>
<dbReference type="PDB" id="7OHT">
    <property type="method" value="EM"/>
    <property type="resolution" value="4.70 A"/>
    <property type="chains" value="J=1-174"/>
</dbReference>
<dbReference type="PDB" id="7UG6">
    <property type="method" value="EM"/>
    <property type="resolution" value="2.90 A"/>
    <property type="chains" value="J=1-174"/>
</dbReference>
<dbReference type="PDB" id="7UOO">
    <property type="method" value="EM"/>
    <property type="resolution" value="2.34 A"/>
    <property type="chains" value="J=1-174"/>
</dbReference>
<dbReference type="PDB" id="7UQB">
    <property type="method" value="EM"/>
    <property type="resolution" value="2.43 A"/>
    <property type="chains" value="J=1-174"/>
</dbReference>
<dbReference type="PDB" id="7UQZ">
    <property type="method" value="EM"/>
    <property type="resolution" value="2.44 A"/>
    <property type="chains" value="J=4-174"/>
</dbReference>
<dbReference type="PDB" id="7V08">
    <property type="method" value="EM"/>
    <property type="resolution" value="2.36 A"/>
    <property type="chains" value="J=1-174"/>
</dbReference>
<dbReference type="PDB" id="7Z34">
    <property type="method" value="EM"/>
    <property type="resolution" value="3.80 A"/>
    <property type="chains" value="J=1-174"/>
</dbReference>
<dbReference type="PDB" id="7ZRS">
    <property type="method" value="EM"/>
    <property type="resolution" value="4.80 A"/>
    <property type="chains" value="BJ=6-174"/>
</dbReference>
<dbReference type="PDB" id="7ZUW">
    <property type="method" value="EM"/>
    <property type="resolution" value="4.30 A"/>
    <property type="chains" value="BJ=6-174"/>
</dbReference>
<dbReference type="PDB" id="7ZW0">
    <property type="method" value="EM"/>
    <property type="resolution" value="2.40 A"/>
    <property type="chains" value="LN=1-174"/>
</dbReference>
<dbReference type="PDB" id="8AAF">
    <property type="method" value="EM"/>
    <property type="resolution" value="2.50 A"/>
    <property type="chains" value="s=1-174"/>
</dbReference>
<dbReference type="PDB" id="8AGT">
    <property type="method" value="EM"/>
    <property type="resolution" value="2.60 A"/>
    <property type="chains" value="s=1-174"/>
</dbReference>
<dbReference type="PDB" id="8AGU">
    <property type="method" value="EM"/>
    <property type="resolution" value="2.70 A"/>
    <property type="chains" value="s=1-174"/>
</dbReference>
<dbReference type="PDB" id="8AGV">
    <property type="method" value="EM"/>
    <property type="resolution" value="2.60 A"/>
    <property type="chains" value="s=1-174"/>
</dbReference>
<dbReference type="PDB" id="8AGW">
    <property type="method" value="EM"/>
    <property type="resolution" value="2.60 A"/>
    <property type="chains" value="s=1-174"/>
</dbReference>
<dbReference type="PDB" id="8AGX">
    <property type="method" value="EM"/>
    <property type="resolution" value="2.40 A"/>
    <property type="chains" value="s=1-174"/>
</dbReference>
<dbReference type="PDB" id="8AGZ">
    <property type="method" value="EM"/>
    <property type="resolution" value="2.60 A"/>
    <property type="chains" value="s=1-174"/>
</dbReference>
<dbReference type="PDB" id="8BN3">
    <property type="method" value="EM"/>
    <property type="resolution" value="2.40 A"/>
    <property type="chains" value="M1=6-173"/>
</dbReference>
<dbReference type="PDB" id="8BQD">
    <property type="method" value="EM"/>
    <property type="resolution" value="3.90 A"/>
    <property type="chains" value="AG=6-174"/>
</dbReference>
<dbReference type="PDB" id="8BQX">
    <property type="method" value="EM"/>
    <property type="resolution" value="3.80 A"/>
    <property type="chains" value="AG=6-174"/>
</dbReference>
<dbReference type="PDB" id="8CCS">
    <property type="method" value="EM"/>
    <property type="resolution" value="1.97 A"/>
    <property type="chains" value="NN=1-174"/>
</dbReference>
<dbReference type="PDB" id="8CDL">
    <property type="method" value="EM"/>
    <property type="resolution" value="2.72 A"/>
    <property type="chains" value="NN=1-174"/>
</dbReference>
<dbReference type="PDB" id="8CDR">
    <property type="method" value="EM"/>
    <property type="resolution" value="2.04 A"/>
    <property type="chains" value="NN=1-174"/>
</dbReference>
<dbReference type="PDB" id="8CEH">
    <property type="method" value="EM"/>
    <property type="resolution" value="2.05 A"/>
    <property type="chains" value="NN=1-174"/>
</dbReference>
<dbReference type="PDB" id="8CF5">
    <property type="method" value="EM"/>
    <property type="resolution" value="2.71 A"/>
    <property type="chains" value="NN=1-174"/>
</dbReference>
<dbReference type="PDB" id="8CG8">
    <property type="method" value="EM"/>
    <property type="resolution" value="2.57 A"/>
    <property type="chains" value="NN=1-174"/>
</dbReference>
<dbReference type="PDB" id="8CGN">
    <property type="method" value="EM"/>
    <property type="resolution" value="2.28 A"/>
    <property type="chains" value="NN=1-174"/>
</dbReference>
<dbReference type="PDB" id="8CIV">
    <property type="method" value="EM"/>
    <property type="resolution" value="2.47 A"/>
    <property type="chains" value="NN=1-174"/>
</dbReference>
<dbReference type="PDB" id="8CKU">
    <property type="method" value="EM"/>
    <property type="resolution" value="3.11 A"/>
    <property type="chains" value="NN=1-174"/>
</dbReference>
<dbReference type="PDB" id="8CMJ">
    <property type="method" value="EM"/>
    <property type="resolution" value="3.79 A"/>
    <property type="chains" value="NN=1-174"/>
</dbReference>
<dbReference type="PDB" id="8HFR">
    <property type="method" value="EM"/>
    <property type="resolution" value="2.64 A"/>
    <property type="chains" value="Jy=1-174"/>
</dbReference>
<dbReference type="PDB" id="8K2D">
    <property type="method" value="EM"/>
    <property type="resolution" value="3.20 A"/>
    <property type="chains" value="LJ=1-174"/>
</dbReference>
<dbReference type="PDB" id="8K82">
    <property type="method" value="EM"/>
    <property type="resolution" value="3.00 A"/>
    <property type="chains" value="LJ=1-174"/>
</dbReference>
<dbReference type="PDB" id="8P8M">
    <property type="method" value="EM"/>
    <property type="resolution" value="2.66 A"/>
    <property type="chains" value="LO=1-174"/>
</dbReference>
<dbReference type="PDB" id="8P8N">
    <property type="method" value="EM"/>
    <property type="resolution" value="2.15 A"/>
    <property type="chains" value="LO=1-174"/>
</dbReference>
<dbReference type="PDB" id="8P8U">
    <property type="method" value="EM"/>
    <property type="resolution" value="2.23 A"/>
    <property type="chains" value="LO=1-174"/>
</dbReference>
<dbReference type="PDB" id="8P9A">
    <property type="method" value="X-ray"/>
    <property type="resolution" value="2.90 A"/>
    <property type="chains" value="CM/s=1-174"/>
</dbReference>
<dbReference type="PDB" id="8PFR">
    <property type="method" value="EM"/>
    <property type="resolution" value="2.15 A"/>
    <property type="chains" value="LO=1-174"/>
</dbReference>
<dbReference type="PDB" id="8T2X">
    <property type="method" value="EM"/>
    <property type="resolution" value="2.46 A"/>
    <property type="chains" value="AJ=1-174"/>
</dbReference>
<dbReference type="PDB" id="8T2Y">
    <property type="method" value="EM"/>
    <property type="resolution" value="2.20 A"/>
    <property type="chains" value="AJ=1-174"/>
</dbReference>
<dbReference type="PDB" id="8T2Z">
    <property type="method" value="EM"/>
    <property type="resolution" value="2.40 A"/>
    <property type="chains" value="AJ=1-174"/>
</dbReference>
<dbReference type="PDB" id="8T30">
    <property type="method" value="EM"/>
    <property type="resolution" value="2.88 A"/>
    <property type="chains" value="AJ=1-174"/>
</dbReference>
<dbReference type="PDB" id="8T3A">
    <property type="method" value="EM"/>
    <property type="resolution" value="2.86 A"/>
    <property type="chains" value="AJ=1-174"/>
</dbReference>
<dbReference type="PDB" id="8T3B">
    <property type="method" value="EM"/>
    <property type="resolution" value="3.08 A"/>
    <property type="chains" value="AJ=1-174"/>
</dbReference>
<dbReference type="PDB" id="8T3C">
    <property type="method" value="EM"/>
    <property type="resolution" value="3.86 A"/>
    <property type="chains" value="AJ=1-174"/>
</dbReference>
<dbReference type="PDB" id="8T3D">
    <property type="method" value="EM"/>
    <property type="resolution" value="2.95 A"/>
    <property type="chains" value="AJ=1-174"/>
</dbReference>
<dbReference type="PDB" id="8T3E">
    <property type="method" value="EM"/>
    <property type="resolution" value="3.04 A"/>
    <property type="chains" value="AJ=1-174"/>
</dbReference>
<dbReference type="PDB" id="8T3F">
    <property type="method" value="EM"/>
    <property type="resolution" value="3.09 A"/>
    <property type="chains" value="AJ=1-174"/>
</dbReference>
<dbReference type="PDB" id="8UT0">
    <property type="method" value="EM"/>
    <property type="resolution" value="3.22 A"/>
    <property type="chains" value="LM=6-174"/>
</dbReference>
<dbReference type="PDB" id="8UTI">
    <property type="method" value="EM"/>
    <property type="resolution" value="3.13 A"/>
    <property type="chains" value="LM=6-174"/>
</dbReference>
<dbReference type="PDB" id="9F9S">
    <property type="method" value="EM"/>
    <property type="resolution" value="2.90 A"/>
    <property type="chains" value="LF/MF=1-174"/>
</dbReference>
<dbReference type="PDBsum" id="3J6X"/>
<dbReference type="PDBsum" id="3J6Y"/>
<dbReference type="PDBsum" id="3J77"/>
<dbReference type="PDBsum" id="3J78"/>
<dbReference type="PDBsum" id="3JCT"/>
<dbReference type="PDBsum" id="4V4B"/>
<dbReference type="PDBsum" id="4V5Z"/>
<dbReference type="PDBsum" id="4V6I"/>
<dbReference type="PDBsum" id="4V7F"/>
<dbReference type="PDBsum" id="4V7R"/>
<dbReference type="PDBsum" id="4V88"/>
<dbReference type="PDBsum" id="4V8Y"/>
<dbReference type="PDBsum" id="4V8Z"/>
<dbReference type="PDBsum" id="4V91"/>
<dbReference type="PDBsum" id="5APN"/>
<dbReference type="PDBsum" id="5APO"/>
<dbReference type="PDBsum" id="5DGE"/>
<dbReference type="PDBsum" id="5FCI"/>
<dbReference type="PDBsum" id="5FCJ"/>
<dbReference type="PDBsum" id="5GAK"/>
<dbReference type="PDBsum" id="5H4P"/>
<dbReference type="PDBsum" id="5JCS"/>
<dbReference type="PDBsum" id="5JUO"/>
<dbReference type="PDBsum" id="5JUP"/>
<dbReference type="PDBsum" id="5JUS"/>
<dbReference type="PDBsum" id="5JUT"/>
<dbReference type="PDBsum" id="5JUU"/>
<dbReference type="PDBsum" id="5M1J"/>
<dbReference type="PDBsum" id="5MC6"/>
<dbReference type="PDBsum" id="5NDG"/>
<dbReference type="PDBsum" id="5T62"/>
<dbReference type="PDBsum" id="5T6R"/>
<dbReference type="PDBsum" id="6FT6"/>
<dbReference type="PDBsum" id="6HD7"/>
<dbReference type="PDBsum" id="6M62"/>
<dbReference type="PDBsum" id="6N8J"/>
<dbReference type="PDBsum" id="6N8K"/>
<dbReference type="PDBsum" id="6N8L"/>
<dbReference type="PDBsum" id="6N8M"/>
<dbReference type="PDBsum" id="6N8N"/>
<dbReference type="PDBsum" id="6N8O"/>
<dbReference type="PDBsum" id="6QIK"/>
<dbReference type="PDBsum" id="6QT0"/>
<dbReference type="PDBsum" id="6QTZ"/>
<dbReference type="PDBsum" id="6RI5"/>
<dbReference type="PDBsum" id="6RZZ"/>
<dbReference type="PDBsum" id="6S05"/>
<dbReference type="PDBsum" id="6SNT"/>
<dbReference type="PDBsum" id="6SV4"/>
<dbReference type="PDBsum" id="6T7I"/>
<dbReference type="PDBsum" id="6T7T"/>
<dbReference type="PDBsum" id="6T83"/>
<dbReference type="PDBsum" id="6YLG"/>
<dbReference type="PDBsum" id="6YLH"/>
<dbReference type="PDBsum" id="6Z6J"/>
<dbReference type="PDBsum" id="6Z6K"/>
<dbReference type="PDBsum" id="7BT6"/>
<dbReference type="PDBsum" id="7BTB"/>
<dbReference type="PDBsum" id="7MPI"/>
<dbReference type="PDBsum" id="7MPJ"/>
<dbReference type="PDBsum" id="7N8B"/>
<dbReference type="PDBsum" id="7OH3"/>
<dbReference type="PDBsum" id="7OHQ"/>
<dbReference type="PDBsum" id="7OHT"/>
<dbReference type="PDBsum" id="7UG6"/>
<dbReference type="PDBsum" id="7UOO"/>
<dbReference type="PDBsum" id="7UQB"/>
<dbReference type="PDBsum" id="7UQZ"/>
<dbReference type="PDBsum" id="7V08"/>
<dbReference type="PDBsum" id="7Z34"/>
<dbReference type="PDBsum" id="7ZRS"/>
<dbReference type="PDBsum" id="7ZUW"/>
<dbReference type="PDBsum" id="7ZW0"/>
<dbReference type="PDBsum" id="8AAF"/>
<dbReference type="PDBsum" id="8AGT"/>
<dbReference type="PDBsum" id="8AGU"/>
<dbReference type="PDBsum" id="8AGV"/>
<dbReference type="PDBsum" id="8AGW"/>
<dbReference type="PDBsum" id="8AGX"/>
<dbReference type="PDBsum" id="8AGZ"/>
<dbReference type="PDBsum" id="8BN3"/>
<dbReference type="PDBsum" id="8BQD"/>
<dbReference type="PDBsum" id="8BQX"/>
<dbReference type="PDBsum" id="8CCS"/>
<dbReference type="PDBsum" id="8CDL"/>
<dbReference type="PDBsum" id="8CDR"/>
<dbReference type="PDBsum" id="8CEH"/>
<dbReference type="PDBsum" id="8CF5"/>
<dbReference type="PDBsum" id="8CG8"/>
<dbReference type="PDBsum" id="8CGN"/>
<dbReference type="PDBsum" id="8CIV"/>
<dbReference type="PDBsum" id="8CKU"/>
<dbReference type="PDBsum" id="8CMJ"/>
<dbReference type="PDBsum" id="8HFR"/>
<dbReference type="PDBsum" id="8K2D"/>
<dbReference type="PDBsum" id="8K82"/>
<dbReference type="PDBsum" id="8P8M"/>
<dbReference type="PDBsum" id="8P8N"/>
<dbReference type="PDBsum" id="8P8U"/>
<dbReference type="PDBsum" id="8P9A"/>
<dbReference type="PDBsum" id="8PFR"/>
<dbReference type="PDBsum" id="8T2X"/>
<dbReference type="PDBsum" id="8T2Y"/>
<dbReference type="PDBsum" id="8T2Z"/>
<dbReference type="PDBsum" id="8T30"/>
<dbReference type="PDBsum" id="8T3A"/>
<dbReference type="PDBsum" id="8T3B"/>
<dbReference type="PDBsum" id="8T3C"/>
<dbReference type="PDBsum" id="8T3D"/>
<dbReference type="PDBsum" id="8T3E"/>
<dbReference type="PDBsum" id="8T3F"/>
<dbReference type="PDBsum" id="8UT0"/>
<dbReference type="PDBsum" id="8UTI"/>
<dbReference type="PDBsum" id="9F9S"/>
<dbReference type="EMDB" id="EMD-0202"/>
<dbReference type="EMDB" id="EMD-0369"/>
<dbReference type="EMDB" id="EMD-0370"/>
<dbReference type="EMDB" id="EMD-0371"/>
<dbReference type="EMDB" id="EMD-0372"/>
<dbReference type="EMDB" id="EMD-0373"/>
<dbReference type="EMDB" id="EMD-0374"/>
<dbReference type="EMDB" id="EMD-10068"/>
<dbReference type="EMDB" id="EMD-10071"/>
<dbReference type="EMDB" id="EMD-10262"/>
<dbReference type="EMDB" id="EMD-10315"/>
<dbReference type="EMDB" id="EMD-10396"/>
<dbReference type="EMDB" id="EMD-10398"/>
<dbReference type="EMDB" id="EMD-10838"/>
<dbReference type="EMDB" id="EMD-10839"/>
<dbReference type="EMDB" id="EMD-11096"/>
<dbReference type="EMDB" id="EMD-11097"/>
<dbReference type="EMDB" id="EMD-12892"/>
<dbReference type="EMDB" id="EMD-12905"/>
<dbReference type="EMDB" id="EMD-12908"/>
<dbReference type="EMDB" id="EMD-14471"/>
<dbReference type="EMDB" id="EMD-14990"/>
<dbReference type="EMDB" id="EMD-15296"/>
<dbReference type="EMDB" id="EMD-15423"/>
<dbReference type="EMDB" id="EMD-15425"/>
<dbReference type="EMDB" id="EMD-15426"/>
<dbReference type="EMDB" id="EMD-15427"/>
<dbReference type="EMDB" id="EMD-15428"/>
<dbReference type="EMDB" id="EMD-16191"/>
<dbReference type="EMDB" id="EMD-16563"/>
<dbReference type="EMDB" id="EMD-16591"/>
<dbReference type="EMDB" id="EMD-16594"/>
<dbReference type="EMDB" id="EMD-16609"/>
<dbReference type="EMDB" id="EMD-16616"/>
<dbReference type="EMDB" id="EMD-16634"/>
<dbReference type="EMDB" id="EMD-16648"/>
<dbReference type="EMDB" id="EMD-16684"/>
<dbReference type="EMDB" id="EMD-16702"/>
<dbReference type="EMDB" id="EMD-16729"/>
<dbReference type="EMDB" id="EMD-17549"/>
<dbReference type="EMDB" id="EMD-17550"/>
<dbReference type="EMDB" id="EMD-17552"/>
<dbReference type="EMDB" id="EMD-17653"/>
<dbReference type="EMDB" id="EMD-23934"/>
<dbReference type="EMDB" id="EMD-23935"/>
<dbReference type="EMDB" id="EMD-24235"/>
<dbReference type="EMDB" id="EMD-26485"/>
<dbReference type="EMDB" id="EMD-26651"/>
<dbReference type="EMDB" id="EMD-26686"/>
<dbReference type="EMDB" id="EMD-26703"/>
<dbReference type="EMDB" id="EMD-26941"/>
<dbReference type="EMDB" id="EMD-30108"/>
<dbReference type="EMDB" id="EMD-30170"/>
<dbReference type="EMDB" id="EMD-30174"/>
<dbReference type="EMDB" id="EMD-3461"/>
<dbReference type="EMDB" id="EMD-34725"/>
<dbReference type="EMDB" id="EMD-36839"/>
<dbReference type="EMDB" id="EMD-36945"/>
<dbReference type="EMDB" id="EMD-4140"/>
<dbReference type="EMDB" id="EMD-42525"/>
<dbReference type="EMDB" id="EMD-42540"/>
<dbReference type="EMDB" id="EMD-4302"/>
<dbReference type="EMDB" id="EMD-4560"/>
<dbReference type="EMDB" id="EMD-4630"/>
<dbReference type="EMDB" id="EMD-4636"/>
<dbReference type="EMDB" id="EMD-4884"/>
<dbReference type="EMDB" id="EMD-50259"/>
<dbReference type="EMDB" id="EMD-8362"/>
<dbReference type="EMDB" id="EMD-8368"/>
<dbReference type="SMR" id="P0C0W9"/>
<dbReference type="BioGRID" id="36268">
    <property type="interactions" value="254"/>
</dbReference>
<dbReference type="ComplexPortal" id="CPX-1601">
    <property type="entry name" value="60S cytosolic large ribosomal subunit"/>
</dbReference>
<dbReference type="DIP" id="DIP-4764N"/>
<dbReference type="FunCoup" id="P0C0W9">
    <property type="interactions" value="1206"/>
</dbReference>
<dbReference type="IntAct" id="P0C0W9">
    <property type="interactions" value="38"/>
</dbReference>
<dbReference type="MINT" id="P0C0W9"/>
<dbReference type="STRING" id="4932.YPR102C"/>
<dbReference type="iPTMnet" id="P0C0W9"/>
<dbReference type="PaxDb" id="4932-YPR102C"/>
<dbReference type="PeptideAtlas" id="P0C0W9"/>
<dbReference type="EnsemblFungi" id="YPR102C_mRNA">
    <property type="protein sequence ID" value="YPR102C"/>
    <property type="gene ID" value="YPR102C"/>
</dbReference>
<dbReference type="GeneID" id="856217"/>
<dbReference type="KEGG" id="sce:YPR102C"/>
<dbReference type="AGR" id="SGD:S000006306"/>
<dbReference type="SGD" id="S000006306">
    <property type="gene designation" value="RPL11A"/>
</dbReference>
<dbReference type="VEuPathDB" id="FungiDB:YPR102C"/>
<dbReference type="eggNOG" id="KOG0397">
    <property type="taxonomic scope" value="Eukaryota"/>
</dbReference>
<dbReference type="GeneTree" id="ENSGT00910000144211"/>
<dbReference type="HOGENOM" id="CLU_061015_3_0_1"/>
<dbReference type="InParanoid" id="P0C0W9"/>
<dbReference type="OMA" id="NPMKELK"/>
<dbReference type="OrthoDB" id="1734943at2759"/>
<dbReference type="BioCyc" id="YEAST:G3O-34242-MONOMER"/>
<dbReference type="Reactome" id="R-SCE-156827">
    <property type="pathway name" value="L13a-mediated translational silencing of Ceruloplasmin expression"/>
</dbReference>
<dbReference type="Reactome" id="R-SCE-1799339">
    <property type="pathway name" value="SRP-dependent cotranslational protein targeting to membrane"/>
</dbReference>
<dbReference type="Reactome" id="R-SCE-72689">
    <property type="pathway name" value="Formation of a pool of free 40S subunits"/>
</dbReference>
<dbReference type="Reactome" id="R-SCE-72706">
    <property type="pathway name" value="GTP hydrolysis and joining of the 60S ribosomal subunit"/>
</dbReference>
<dbReference type="Reactome" id="R-SCE-975956">
    <property type="pathway name" value="Nonsense Mediated Decay (NMD) independent of the Exon Junction Complex (EJC)"/>
</dbReference>
<dbReference type="Reactome" id="R-SCE-975957">
    <property type="pathway name" value="Nonsense Mediated Decay (NMD) enhanced by the Exon Junction Complex (EJC)"/>
</dbReference>
<dbReference type="BioGRID-ORCS" id="856217">
    <property type="hits" value="0 hits in 10 CRISPR screens"/>
</dbReference>
<dbReference type="ChiTaRS" id="RPL16A">
    <property type="organism name" value="yeast"/>
</dbReference>
<dbReference type="PRO" id="PR:P0C0W9"/>
<dbReference type="Proteomes" id="UP000002311">
    <property type="component" value="Chromosome XVI"/>
</dbReference>
<dbReference type="RNAct" id="P0C0W9">
    <property type="molecule type" value="protein"/>
</dbReference>
<dbReference type="GO" id="GO:0005829">
    <property type="term" value="C:cytosol"/>
    <property type="evidence" value="ECO:0000304"/>
    <property type="project" value="Reactome"/>
</dbReference>
<dbReference type="GO" id="GO:0022625">
    <property type="term" value="C:cytosolic large ribosomal subunit"/>
    <property type="evidence" value="ECO:0000314"/>
    <property type="project" value="SGD"/>
</dbReference>
<dbReference type="GO" id="GO:0005634">
    <property type="term" value="C:nucleus"/>
    <property type="evidence" value="ECO:0007669"/>
    <property type="project" value="UniProtKB-SubCell"/>
</dbReference>
<dbReference type="GO" id="GO:0003723">
    <property type="term" value="F:RNA binding"/>
    <property type="evidence" value="ECO:0000318"/>
    <property type="project" value="GO_Central"/>
</dbReference>
<dbReference type="GO" id="GO:0019843">
    <property type="term" value="F:rRNA binding"/>
    <property type="evidence" value="ECO:0007669"/>
    <property type="project" value="UniProtKB-KW"/>
</dbReference>
<dbReference type="GO" id="GO:0003735">
    <property type="term" value="F:structural constituent of ribosome"/>
    <property type="evidence" value="ECO:0000318"/>
    <property type="project" value="GO_Central"/>
</dbReference>
<dbReference type="GO" id="GO:0002181">
    <property type="term" value="P:cytoplasmic translation"/>
    <property type="evidence" value="ECO:0000305"/>
    <property type="project" value="SGD"/>
</dbReference>
<dbReference type="GO" id="GO:0000027">
    <property type="term" value="P:ribosomal large subunit assembly"/>
    <property type="evidence" value="ECO:0000315"/>
    <property type="project" value="SGD"/>
</dbReference>
<dbReference type="GO" id="GO:0006412">
    <property type="term" value="P:translation"/>
    <property type="evidence" value="ECO:0000318"/>
    <property type="project" value="GO_Central"/>
</dbReference>
<dbReference type="FunFam" id="3.30.1440.10:FF:000002">
    <property type="entry name" value="60S ribosomal protein L11"/>
    <property type="match status" value="1"/>
</dbReference>
<dbReference type="Gene3D" id="3.30.1440.10">
    <property type="match status" value="1"/>
</dbReference>
<dbReference type="InterPro" id="IPR002132">
    <property type="entry name" value="Ribosomal_uL5"/>
</dbReference>
<dbReference type="InterPro" id="IPR031309">
    <property type="entry name" value="Ribosomal_uL5_C"/>
</dbReference>
<dbReference type="InterPro" id="IPR020929">
    <property type="entry name" value="Ribosomal_uL5_CS"/>
</dbReference>
<dbReference type="InterPro" id="IPR022803">
    <property type="entry name" value="Ribosomal_uL5_dom_sf"/>
</dbReference>
<dbReference type="InterPro" id="IPR031310">
    <property type="entry name" value="Ribosomal_uL5_N"/>
</dbReference>
<dbReference type="NCBIfam" id="NF003258">
    <property type="entry name" value="PRK04219.1"/>
    <property type="match status" value="1"/>
</dbReference>
<dbReference type="PANTHER" id="PTHR11994">
    <property type="entry name" value="60S RIBOSOMAL PROTEIN L11-RELATED"/>
    <property type="match status" value="1"/>
</dbReference>
<dbReference type="Pfam" id="PF00281">
    <property type="entry name" value="Ribosomal_L5"/>
    <property type="match status" value="1"/>
</dbReference>
<dbReference type="Pfam" id="PF00673">
    <property type="entry name" value="Ribosomal_L5_C"/>
    <property type="match status" value="1"/>
</dbReference>
<dbReference type="PIRSF" id="PIRSF002161">
    <property type="entry name" value="Ribosomal_L5"/>
    <property type="match status" value="1"/>
</dbReference>
<dbReference type="SUPFAM" id="SSF55282">
    <property type="entry name" value="RL5-like"/>
    <property type="match status" value="1"/>
</dbReference>
<dbReference type="PROSITE" id="PS00358">
    <property type="entry name" value="RIBOSOMAL_L5"/>
    <property type="match status" value="1"/>
</dbReference>
<protein>
    <recommendedName>
        <fullName evidence="8">Large ribosomal subunit protein uL5A</fullName>
    </recommendedName>
    <alternativeName>
        <fullName evidence="9">60S ribosomal protein L11-A</fullName>
    </alternativeName>
    <alternativeName>
        <fullName>L16</fullName>
    </alternativeName>
    <alternativeName>
        <fullName>RP39</fullName>
    </alternativeName>
    <alternativeName>
        <fullName>YL22</fullName>
    </alternativeName>
</protein>
<keyword id="KW-0002">3D-structure</keyword>
<keyword id="KW-0007">Acetylation</keyword>
<keyword id="KW-0963">Cytoplasm</keyword>
<keyword id="KW-0903">Direct protein sequencing</keyword>
<keyword id="KW-0488">Methylation</keyword>
<keyword id="KW-0539">Nucleus</keyword>
<keyword id="KW-1185">Reference proteome</keyword>
<keyword id="KW-0687">Ribonucleoprotein</keyword>
<keyword id="KW-0689">Ribosomal protein</keyword>
<keyword id="KW-0694">RNA-binding</keyword>
<keyword id="KW-0699">rRNA-binding</keyword>